<reference key="1">
    <citation type="journal article" date="2005" name="PLoS Biol.">
        <title>The genome sequence of Rickettsia felis identifies the first putative conjugative plasmid in an obligate intracellular parasite.</title>
        <authorList>
            <person name="Ogata H."/>
            <person name="Renesto P."/>
            <person name="Audic S."/>
            <person name="Robert C."/>
            <person name="Blanc G."/>
            <person name="Fournier P.-E."/>
            <person name="Parinello H."/>
            <person name="Claverie J.-M."/>
            <person name="Raoult D."/>
        </authorList>
    </citation>
    <scope>NUCLEOTIDE SEQUENCE [LARGE SCALE GENOMIC DNA]</scope>
    <source>
        <strain>ATCC VR-1525 / URRWXCal2</strain>
    </source>
</reference>
<name>QUEF_RICFE</name>
<keyword id="KW-0963">Cytoplasm</keyword>
<keyword id="KW-0521">NADP</keyword>
<keyword id="KW-0560">Oxidoreductase</keyword>
<keyword id="KW-0671">Queuosine biosynthesis</keyword>
<organism>
    <name type="scientific">Rickettsia felis (strain ATCC VR-1525 / URRWXCal2)</name>
    <name type="common">Rickettsia azadi</name>
    <dbReference type="NCBI Taxonomy" id="315456"/>
    <lineage>
        <taxon>Bacteria</taxon>
        <taxon>Pseudomonadati</taxon>
        <taxon>Pseudomonadota</taxon>
        <taxon>Alphaproteobacteria</taxon>
        <taxon>Rickettsiales</taxon>
        <taxon>Rickettsiaceae</taxon>
        <taxon>Rickettsieae</taxon>
        <taxon>Rickettsia</taxon>
        <taxon>spotted fever group</taxon>
    </lineage>
</organism>
<feature type="chain" id="PRO_0000163053" description="NADPH-dependent 7-cyano-7-deazaguanine reductase">
    <location>
        <begin position="1"/>
        <end position="273"/>
    </location>
</feature>
<feature type="active site" description="Thioimide intermediate" evidence="1">
    <location>
        <position position="179"/>
    </location>
</feature>
<feature type="active site" description="Proton donor" evidence="1">
    <location>
        <position position="186"/>
    </location>
</feature>
<feature type="binding site" evidence="1">
    <location>
        <begin position="81"/>
        <end position="83"/>
    </location>
    <ligand>
        <name>substrate</name>
    </ligand>
</feature>
<feature type="binding site" evidence="1">
    <location>
        <begin position="83"/>
        <end position="84"/>
    </location>
    <ligand>
        <name>NADPH</name>
        <dbReference type="ChEBI" id="CHEBI:57783"/>
    </ligand>
</feature>
<feature type="binding site" evidence="1">
    <location>
        <begin position="218"/>
        <end position="219"/>
    </location>
    <ligand>
        <name>substrate</name>
    </ligand>
</feature>
<feature type="binding site" evidence="1">
    <location>
        <begin position="247"/>
        <end position="248"/>
    </location>
    <ligand>
        <name>NADPH</name>
        <dbReference type="ChEBI" id="CHEBI:57783"/>
    </ligand>
</feature>
<comment type="function">
    <text evidence="1">Catalyzes the NADPH-dependent reduction of 7-cyano-7-deazaguanine (preQ0) to 7-aminomethyl-7-deazaguanine (preQ1).</text>
</comment>
<comment type="catalytic activity">
    <reaction evidence="1">
        <text>7-aminomethyl-7-carbaguanine + 2 NADP(+) = 7-cyano-7-deazaguanine + 2 NADPH + 3 H(+)</text>
        <dbReference type="Rhea" id="RHEA:13409"/>
        <dbReference type="ChEBI" id="CHEBI:15378"/>
        <dbReference type="ChEBI" id="CHEBI:45075"/>
        <dbReference type="ChEBI" id="CHEBI:57783"/>
        <dbReference type="ChEBI" id="CHEBI:58349"/>
        <dbReference type="ChEBI" id="CHEBI:58703"/>
        <dbReference type="EC" id="1.7.1.13"/>
    </reaction>
</comment>
<comment type="pathway">
    <text evidence="1">tRNA modification; tRNA-queuosine biosynthesis.</text>
</comment>
<comment type="subunit">
    <text evidence="1">Homodimer.</text>
</comment>
<comment type="subcellular location">
    <subcellularLocation>
        <location evidence="1">Cytoplasm</location>
    </subcellularLocation>
</comment>
<comment type="similarity">
    <text evidence="1">Belongs to the GTP cyclohydrolase I family. QueF type 2 subfamily.</text>
</comment>
<protein>
    <recommendedName>
        <fullName evidence="1">NADPH-dependent 7-cyano-7-deazaguanine reductase</fullName>
        <ecNumber evidence="1">1.7.1.13</ecNumber>
    </recommendedName>
    <alternativeName>
        <fullName evidence="1">7-cyano-7-carbaguanine reductase</fullName>
    </alternativeName>
    <alternativeName>
        <fullName evidence="1">NADPH-dependent nitrile oxidoreductase</fullName>
    </alternativeName>
    <alternativeName>
        <fullName evidence="1">PreQ(0) reductase</fullName>
    </alternativeName>
</protein>
<proteinExistence type="inferred from homology"/>
<gene>
    <name evidence="1" type="primary">queF</name>
    <name type="ordered locus">RF_0057</name>
</gene>
<evidence type="ECO:0000255" key="1">
    <source>
        <dbReference type="HAMAP-Rule" id="MF_00817"/>
    </source>
</evidence>
<accession>Q4UNF0</accession>
<dbReference type="EC" id="1.7.1.13" evidence="1"/>
<dbReference type="EMBL" id="CP000053">
    <property type="protein sequence ID" value="AAY60908.1"/>
    <property type="molecule type" value="Genomic_DNA"/>
</dbReference>
<dbReference type="SMR" id="Q4UNF0"/>
<dbReference type="STRING" id="315456.RF_0057"/>
<dbReference type="KEGG" id="rfe:RF_0057"/>
<dbReference type="eggNOG" id="COG0780">
    <property type="taxonomic scope" value="Bacteria"/>
</dbReference>
<dbReference type="eggNOG" id="COG2904">
    <property type="taxonomic scope" value="Bacteria"/>
</dbReference>
<dbReference type="HOGENOM" id="CLU_054738_0_0_5"/>
<dbReference type="OrthoDB" id="9789995at2"/>
<dbReference type="UniPathway" id="UPA00392"/>
<dbReference type="Proteomes" id="UP000008548">
    <property type="component" value="Chromosome"/>
</dbReference>
<dbReference type="GO" id="GO:0005737">
    <property type="term" value="C:cytoplasm"/>
    <property type="evidence" value="ECO:0007669"/>
    <property type="project" value="UniProtKB-SubCell"/>
</dbReference>
<dbReference type="GO" id="GO:0033739">
    <property type="term" value="F:preQ1 synthase activity"/>
    <property type="evidence" value="ECO:0007669"/>
    <property type="project" value="UniProtKB-UniRule"/>
</dbReference>
<dbReference type="GO" id="GO:0008616">
    <property type="term" value="P:queuosine biosynthetic process"/>
    <property type="evidence" value="ECO:0007669"/>
    <property type="project" value="UniProtKB-UniRule"/>
</dbReference>
<dbReference type="GO" id="GO:0006400">
    <property type="term" value="P:tRNA modification"/>
    <property type="evidence" value="ECO:0007669"/>
    <property type="project" value="UniProtKB-UniRule"/>
</dbReference>
<dbReference type="Gene3D" id="3.30.1130.10">
    <property type="match status" value="2"/>
</dbReference>
<dbReference type="HAMAP" id="MF_00817">
    <property type="entry name" value="QueF_type2"/>
    <property type="match status" value="1"/>
</dbReference>
<dbReference type="InterPro" id="IPR043133">
    <property type="entry name" value="GTP-CH-I_C/QueF"/>
</dbReference>
<dbReference type="InterPro" id="IPR050084">
    <property type="entry name" value="NADPH_dep_7-cyano-7-deazaG_red"/>
</dbReference>
<dbReference type="InterPro" id="IPR029500">
    <property type="entry name" value="QueF"/>
</dbReference>
<dbReference type="InterPro" id="IPR029139">
    <property type="entry name" value="QueF_N"/>
</dbReference>
<dbReference type="InterPro" id="IPR016428">
    <property type="entry name" value="QueF_type2"/>
</dbReference>
<dbReference type="NCBIfam" id="TIGR03138">
    <property type="entry name" value="QueF"/>
    <property type="match status" value="1"/>
</dbReference>
<dbReference type="PANTHER" id="PTHR34354">
    <property type="entry name" value="NADPH-DEPENDENT 7-CYANO-7-DEAZAGUANINE REDUCTASE"/>
    <property type="match status" value="1"/>
</dbReference>
<dbReference type="PANTHER" id="PTHR34354:SF1">
    <property type="entry name" value="NADPH-DEPENDENT 7-CYANO-7-DEAZAGUANINE REDUCTASE"/>
    <property type="match status" value="1"/>
</dbReference>
<dbReference type="Pfam" id="PF14489">
    <property type="entry name" value="QueF"/>
    <property type="match status" value="1"/>
</dbReference>
<dbReference type="Pfam" id="PF14819">
    <property type="entry name" value="QueF_N"/>
    <property type="match status" value="1"/>
</dbReference>
<dbReference type="PIRSF" id="PIRSF004750">
    <property type="entry name" value="Nitrile_oxidored_YqcD_prd"/>
    <property type="match status" value="1"/>
</dbReference>
<dbReference type="SUPFAM" id="SSF55620">
    <property type="entry name" value="Tetrahydrobiopterin biosynthesis enzymes-like"/>
    <property type="match status" value="1"/>
</dbReference>
<sequence>MPLSTSLLGKKSTYKDSYDATLLFKIPRINNRNELGINSNNLPFYGVDIWNTYELSCLNKNGKPWVGVGTFYIPTDSENIVESKSFKLYLNSFNNFVVESVEELERIILQDLSNVTHAKVTGRIFPINTKIEFSIPSGKNIDDLDIVCNNYGPPDNSLIEYEDVLVEEEINSNLLKSNCLVTGQPDWGTIVIKYKGKKLKHDSFLKYLISFRNCNEFAEQCAERIFTDIKNAINPDFLSIYIVYTRRGGIDICPYRFTNKSYTLPSDKRFIRQ</sequence>